<proteinExistence type="inferred from homology"/>
<feature type="chain" id="PRO_0000093697" description="Inosine-5'-monophosphate dehydrogenase">
    <location>
        <begin position="1"/>
        <end position="488"/>
    </location>
</feature>
<feature type="domain" description="CBS 1" evidence="1">
    <location>
        <begin position="94"/>
        <end position="150"/>
    </location>
</feature>
<feature type="domain" description="CBS 2" evidence="1">
    <location>
        <begin position="154"/>
        <end position="215"/>
    </location>
</feature>
<feature type="active site" description="Thioimidate intermediate" evidence="1">
    <location>
        <position position="306"/>
    </location>
</feature>
<feature type="active site" description="Proton acceptor" evidence="1">
    <location>
        <position position="402"/>
    </location>
</feature>
<feature type="binding site" evidence="1">
    <location>
        <begin position="249"/>
        <end position="251"/>
    </location>
    <ligand>
        <name>NAD(+)</name>
        <dbReference type="ChEBI" id="CHEBI:57540"/>
    </ligand>
</feature>
<feature type="binding site" evidence="1">
    <location>
        <position position="249"/>
    </location>
    <ligand>
        <name>NAD(+)</name>
        <dbReference type="ChEBI" id="CHEBI:57540"/>
    </ligand>
</feature>
<feature type="binding site" evidence="1">
    <location>
        <begin position="299"/>
        <end position="301"/>
    </location>
    <ligand>
        <name>NAD(+)</name>
        <dbReference type="ChEBI" id="CHEBI:57540"/>
    </ligand>
</feature>
<feature type="binding site" description="in other chain" evidence="1">
    <location>
        <position position="301"/>
    </location>
    <ligand>
        <name>K(+)</name>
        <dbReference type="ChEBI" id="CHEBI:29103"/>
        <note>ligand shared between two tetrameric partners</note>
    </ligand>
</feature>
<feature type="binding site" description="in other chain" evidence="1">
    <location>
        <position position="303"/>
    </location>
    <ligand>
        <name>K(+)</name>
        <dbReference type="ChEBI" id="CHEBI:29103"/>
        <note>ligand shared between two tetrameric partners</note>
    </ligand>
</feature>
<feature type="binding site" evidence="1">
    <location>
        <position position="304"/>
    </location>
    <ligand>
        <name>IMP</name>
        <dbReference type="ChEBI" id="CHEBI:58053"/>
    </ligand>
</feature>
<feature type="binding site" description="in other chain" evidence="1">
    <location>
        <position position="306"/>
    </location>
    <ligand>
        <name>K(+)</name>
        <dbReference type="ChEBI" id="CHEBI:29103"/>
        <note>ligand shared between two tetrameric partners</note>
    </ligand>
</feature>
<feature type="binding site" evidence="1">
    <location>
        <begin position="339"/>
        <end position="341"/>
    </location>
    <ligand>
        <name>IMP</name>
        <dbReference type="ChEBI" id="CHEBI:58053"/>
    </ligand>
</feature>
<feature type="binding site" evidence="1">
    <location>
        <begin position="362"/>
        <end position="363"/>
    </location>
    <ligand>
        <name>IMP</name>
        <dbReference type="ChEBI" id="CHEBI:58053"/>
    </ligand>
</feature>
<feature type="binding site" evidence="1">
    <location>
        <begin position="386"/>
        <end position="390"/>
    </location>
    <ligand>
        <name>IMP</name>
        <dbReference type="ChEBI" id="CHEBI:58053"/>
    </ligand>
</feature>
<feature type="binding site" evidence="1">
    <location>
        <position position="416"/>
    </location>
    <ligand>
        <name>IMP</name>
        <dbReference type="ChEBI" id="CHEBI:58053"/>
    </ligand>
</feature>
<feature type="binding site" evidence="1">
    <location>
        <position position="470"/>
    </location>
    <ligand>
        <name>K(+)</name>
        <dbReference type="ChEBI" id="CHEBI:29103"/>
        <note>ligand shared between two tetrameric partners</note>
    </ligand>
</feature>
<feature type="binding site" evidence="1">
    <location>
        <position position="471"/>
    </location>
    <ligand>
        <name>K(+)</name>
        <dbReference type="ChEBI" id="CHEBI:29103"/>
        <note>ligand shared between two tetrameric partners</note>
    </ligand>
</feature>
<feature type="binding site" evidence="1">
    <location>
        <position position="472"/>
    </location>
    <ligand>
        <name>K(+)</name>
        <dbReference type="ChEBI" id="CHEBI:29103"/>
        <note>ligand shared between two tetrameric partners</note>
    </ligand>
</feature>
<evidence type="ECO:0000255" key="1">
    <source>
        <dbReference type="HAMAP-Rule" id="MF_01964"/>
    </source>
</evidence>
<dbReference type="EC" id="1.1.1.205" evidence="1"/>
<dbReference type="EMBL" id="L42023">
    <property type="protein sequence ID" value="AAC21890.1"/>
    <property type="molecule type" value="Genomic_DNA"/>
</dbReference>
<dbReference type="PIR" id="H64055">
    <property type="entry name" value="H64055"/>
</dbReference>
<dbReference type="RefSeq" id="NP_438392.1">
    <property type="nucleotide sequence ID" value="NC_000907.1"/>
</dbReference>
<dbReference type="SMR" id="P44334"/>
<dbReference type="STRING" id="71421.HI_0221"/>
<dbReference type="EnsemblBacteria" id="AAC21890">
    <property type="protein sequence ID" value="AAC21890"/>
    <property type="gene ID" value="HI_0221"/>
</dbReference>
<dbReference type="KEGG" id="hin:HI_0221"/>
<dbReference type="PATRIC" id="fig|71421.8.peg.233"/>
<dbReference type="eggNOG" id="COG0516">
    <property type="taxonomic scope" value="Bacteria"/>
</dbReference>
<dbReference type="eggNOG" id="COG0517">
    <property type="taxonomic scope" value="Bacteria"/>
</dbReference>
<dbReference type="HOGENOM" id="CLU_022552_2_1_6"/>
<dbReference type="OrthoDB" id="9805398at2"/>
<dbReference type="PhylomeDB" id="P44334"/>
<dbReference type="BioCyc" id="HINF71421:G1GJ1-237-MONOMER"/>
<dbReference type="UniPathway" id="UPA00601">
    <property type="reaction ID" value="UER00295"/>
</dbReference>
<dbReference type="Proteomes" id="UP000000579">
    <property type="component" value="Chromosome"/>
</dbReference>
<dbReference type="GO" id="GO:0003938">
    <property type="term" value="F:IMP dehydrogenase activity"/>
    <property type="evidence" value="ECO:0000318"/>
    <property type="project" value="GO_Central"/>
</dbReference>
<dbReference type="GO" id="GO:0046872">
    <property type="term" value="F:metal ion binding"/>
    <property type="evidence" value="ECO:0007669"/>
    <property type="project" value="UniProtKB-UniRule"/>
</dbReference>
<dbReference type="GO" id="GO:0000166">
    <property type="term" value="F:nucleotide binding"/>
    <property type="evidence" value="ECO:0007669"/>
    <property type="project" value="UniProtKB-UniRule"/>
</dbReference>
<dbReference type="GO" id="GO:0006177">
    <property type="term" value="P:GMP biosynthetic process"/>
    <property type="evidence" value="ECO:0007669"/>
    <property type="project" value="UniProtKB-UniRule"/>
</dbReference>
<dbReference type="GO" id="GO:0006183">
    <property type="term" value="P:GTP biosynthetic process"/>
    <property type="evidence" value="ECO:0000318"/>
    <property type="project" value="GO_Central"/>
</dbReference>
<dbReference type="CDD" id="cd04601">
    <property type="entry name" value="CBS_pair_IMPDH"/>
    <property type="match status" value="1"/>
</dbReference>
<dbReference type="CDD" id="cd00381">
    <property type="entry name" value="IMPDH"/>
    <property type="match status" value="1"/>
</dbReference>
<dbReference type="FunFam" id="3.20.20.70:FF:000003">
    <property type="entry name" value="GMP reductase"/>
    <property type="match status" value="1"/>
</dbReference>
<dbReference type="Gene3D" id="3.20.20.70">
    <property type="entry name" value="Aldolase class I"/>
    <property type="match status" value="1"/>
</dbReference>
<dbReference type="HAMAP" id="MF_01964">
    <property type="entry name" value="IMPDH"/>
    <property type="match status" value="1"/>
</dbReference>
<dbReference type="InterPro" id="IPR013785">
    <property type="entry name" value="Aldolase_TIM"/>
</dbReference>
<dbReference type="InterPro" id="IPR000644">
    <property type="entry name" value="CBS_dom"/>
</dbReference>
<dbReference type="InterPro" id="IPR046342">
    <property type="entry name" value="CBS_dom_sf"/>
</dbReference>
<dbReference type="InterPro" id="IPR005990">
    <property type="entry name" value="IMP_DH"/>
</dbReference>
<dbReference type="InterPro" id="IPR015875">
    <property type="entry name" value="IMP_DH/GMP_Rdtase_CS"/>
</dbReference>
<dbReference type="InterPro" id="IPR001093">
    <property type="entry name" value="IMP_DH_GMPRt"/>
</dbReference>
<dbReference type="NCBIfam" id="TIGR01302">
    <property type="entry name" value="IMP_dehydrog"/>
    <property type="match status" value="1"/>
</dbReference>
<dbReference type="PANTHER" id="PTHR11911:SF111">
    <property type="entry name" value="INOSINE-5'-MONOPHOSPHATE DEHYDROGENASE"/>
    <property type="match status" value="1"/>
</dbReference>
<dbReference type="PANTHER" id="PTHR11911">
    <property type="entry name" value="INOSINE-5-MONOPHOSPHATE DEHYDROGENASE RELATED"/>
    <property type="match status" value="1"/>
</dbReference>
<dbReference type="Pfam" id="PF00571">
    <property type="entry name" value="CBS"/>
    <property type="match status" value="2"/>
</dbReference>
<dbReference type="Pfam" id="PF00478">
    <property type="entry name" value="IMPDH"/>
    <property type="match status" value="1"/>
</dbReference>
<dbReference type="PIRSF" id="PIRSF000130">
    <property type="entry name" value="IMPDH"/>
    <property type="match status" value="1"/>
</dbReference>
<dbReference type="SMART" id="SM00116">
    <property type="entry name" value="CBS"/>
    <property type="match status" value="2"/>
</dbReference>
<dbReference type="SMART" id="SM01240">
    <property type="entry name" value="IMPDH"/>
    <property type="match status" value="1"/>
</dbReference>
<dbReference type="SUPFAM" id="SSF54631">
    <property type="entry name" value="CBS-domain pair"/>
    <property type="match status" value="1"/>
</dbReference>
<dbReference type="SUPFAM" id="SSF51412">
    <property type="entry name" value="Inosine monophosphate dehydrogenase (IMPDH)"/>
    <property type="match status" value="1"/>
</dbReference>
<dbReference type="PROSITE" id="PS51371">
    <property type="entry name" value="CBS"/>
    <property type="match status" value="2"/>
</dbReference>
<dbReference type="PROSITE" id="PS00487">
    <property type="entry name" value="IMP_DH_GMP_RED"/>
    <property type="match status" value="1"/>
</dbReference>
<keyword id="KW-0129">CBS domain</keyword>
<keyword id="KW-0332">GMP biosynthesis</keyword>
<keyword id="KW-0479">Metal-binding</keyword>
<keyword id="KW-0520">NAD</keyword>
<keyword id="KW-0560">Oxidoreductase</keyword>
<keyword id="KW-0630">Potassium</keyword>
<keyword id="KW-0658">Purine biosynthesis</keyword>
<keyword id="KW-1185">Reference proteome</keyword>
<keyword id="KW-0677">Repeat</keyword>
<comment type="function">
    <text evidence="1">Catalyzes the conversion of inosine 5'-phosphate (IMP) to xanthosine 5'-phosphate (XMP), the first committed and rate-limiting step in the de novo synthesis of guanine nucleotides, and therefore plays an important role in the regulation of cell growth.</text>
</comment>
<comment type="catalytic activity">
    <reaction evidence="1">
        <text>IMP + NAD(+) + H2O = XMP + NADH + H(+)</text>
        <dbReference type="Rhea" id="RHEA:11708"/>
        <dbReference type="ChEBI" id="CHEBI:15377"/>
        <dbReference type="ChEBI" id="CHEBI:15378"/>
        <dbReference type="ChEBI" id="CHEBI:57464"/>
        <dbReference type="ChEBI" id="CHEBI:57540"/>
        <dbReference type="ChEBI" id="CHEBI:57945"/>
        <dbReference type="ChEBI" id="CHEBI:58053"/>
        <dbReference type="EC" id="1.1.1.205"/>
    </reaction>
</comment>
<comment type="cofactor">
    <cofactor evidence="1">
        <name>K(+)</name>
        <dbReference type="ChEBI" id="CHEBI:29103"/>
    </cofactor>
</comment>
<comment type="activity regulation">
    <text evidence="1">Mycophenolic acid (MPA) is a non-competitive inhibitor that prevents formation of the closed enzyme conformation by binding to the same site as the amobile flap. In contrast, mizoribine monophosphate (MZP) is a competitive inhibitor that induces the closed conformation. MPA is a potent inhibitor of mammalian IMPDHs but a poor inhibitor of the bacterial enzymes. MZP is a more potent inhibitor of bacterial IMPDH.</text>
</comment>
<comment type="pathway">
    <text evidence="1">Purine metabolism; XMP biosynthesis via de novo pathway; XMP from IMP: step 1/1.</text>
</comment>
<comment type="subunit">
    <text evidence="1">Homotetramer.</text>
</comment>
<comment type="similarity">
    <text evidence="1">Belongs to the IMPDH/GMPR family.</text>
</comment>
<sequence length="488" mass="51981">MSLRIKQEALTFDDVLLVPAHSTVLPNTANLSTQLTKEIRLNIPMLSAAMDTVTETKLAISLAQEGGIGFIHKNMTIERQADRVRKVKKFESGIVSEPVTVLPNLTLAELAEMVKKNGFAGYPVVDGENNLIGIITGRDTRFVKDLSKTVSQVMTKKEDLVTVKEGASREEILELMHQHRVEKVLVVNDSFKLKGMITVKDFQKAEQKPNACKDEFGRLRVGAAVGAGAGNEERIDALVKAGVDVLLIDSSHGHSEGVLQRVRETRAKYPNLPIVAGNVATAEGAIALADAGASAVKVGIGPGSICTTRIVTGVGVPQITAIADAAAALKDRGIPVIADGGIRFSGDIAKAIAAGASCVMVGSMFAGTEEAPGEIELYQGRAFKSYRGMGSLGAMAKGSSDRYFQSDNAADKLVPEGIEGRIPYKGYLKEIIHQQMGGLRSCMGLTGCATIDELRTKAEFVRISGAGIKESHVHDVAITKEAPNYRMG</sequence>
<accession>P44334</accession>
<gene>
    <name evidence="1" type="primary">guaB</name>
    <name type="ordered locus">HI_0221</name>
</gene>
<protein>
    <recommendedName>
        <fullName evidence="1">Inosine-5'-monophosphate dehydrogenase</fullName>
        <shortName evidence="1">IMP dehydrogenase</shortName>
        <shortName evidence="1">IMPD</shortName>
        <shortName evidence="1">IMPDH</shortName>
        <ecNumber evidence="1">1.1.1.205</ecNumber>
    </recommendedName>
</protein>
<organism>
    <name type="scientific">Haemophilus influenzae (strain ATCC 51907 / DSM 11121 / KW20 / Rd)</name>
    <dbReference type="NCBI Taxonomy" id="71421"/>
    <lineage>
        <taxon>Bacteria</taxon>
        <taxon>Pseudomonadati</taxon>
        <taxon>Pseudomonadota</taxon>
        <taxon>Gammaproteobacteria</taxon>
        <taxon>Pasteurellales</taxon>
        <taxon>Pasteurellaceae</taxon>
        <taxon>Haemophilus</taxon>
    </lineage>
</organism>
<reference key="1">
    <citation type="journal article" date="1995" name="Science">
        <title>Whole-genome random sequencing and assembly of Haemophilus influenzae Rd.</title>
        <authorList>
            <person name="Fleischmann R.D."/>
            <person name="Adams M.D."/>
            <person name="White O."/>
            <person name="Clayton R.A."/>
            <person name="Kirkness E.F."/>
            <person name="Kerlavage A.R."/>
            <person name="Bult C.J."/>
            <person name="Tomb J.-F."/>
            <person name="Dougherty B.A."/>
            <person name="Merrick J.M."/>
            <person name="McKenney K."/>
            <person name="Sutton G.G."/>
            <person name="FitzHugh W."/>
            <person name="Fields C.A."/>
            <person name="Gocayne J.D."/>
            <person name="Scott J.D."/>
            <person name="Shirley R."/>
            <person name="Liu L.-I."/>
            <person name="Glodek A."/>
            <person name="Kelley J.M."/>
            <person name="Weidman J.F."/>
            <person name="Phillips C.A."/>
            <person name="Spriggs T."/>
            <person name="Hedblom E."/>
            <person name="Cotton M.D."/>
            <person name="Utterback T.R."/>
            <person name="Hanna M.C."/>
            <person name="Nguyen D.T."/>
            <person name="Saudek D.M."/>
            <person name="Brandon R.C."/>
            <person name="Fine L.D."/>
            <person name="Fritchman J.L."/>
            <person name="Fuhrmann J.L."/>
            <person name="Geoghagen N.S.M."/>
            <person name="Gnehm C.L."/>
            <person name="McDonald L.A."/>
            <person name="Small K.V."/>
            <person name="Fraser C.M."/>
            <person name="Smith H.O."/>
            <person name="Venter J.C."/>
        </authorList>
    </citation>
    <scope>NUCLEOTIDE SEQUENCE [LARGE SCALE GENOMIC DNA]</scope>
    <source>
        <strain>ATCC 51907 / DSM 11121 / KW20 / Rd</strain>
    </source>
</reference>
<name>IMDH_HAEIN</name>